<dbReference type="EMBL" id="CP000438">
    <property type="protein sequence ID" value="ABJ13522.1"/>
    <property type="molecule type" value="Genomic_DNA"/>
</dbReference>
<dbReference type="RefSeq" id="WP_003093703.1">
    <property type="nucleotide sequence ID" value="NZ_CP034244.1"/>
</dbReference>
<dbReference type="SMR" id="Q02T68"/>
<dbReference type="KEGG" id="pau:PA14_08970"/>
<dbReference type="PseudoCAP" id="PA14_08970"/>
<dbReference type="HOGENOM" id="CLU_061015_2_1_6"/>
<dbReference type="BioCyc" id="PAER208963:G1G74-748-MONOMER"/>
<dbReference type="Proteomes" id="UP000000653">
    <property type="component" value="Chromosome"/>
</dbReference>
<dbReference type="GO" id="GO:1990904">
    <property type="term" value="C:ribonucleoprotein complex"/>
    <property type="evidence" value="ECO:0007669"/>
    <property type="project" value="UniProtKB-KW"/>
</dbReference>
<dbReference type="GO" id="GO:0005840">
    <property type="term" value="C:ribosome"/>
    <property type="evidence" value="ECO:0007669"/>
    <property type="project" value="UniProtKB-KW"/>
</dbReference>
<dbReference type="GO" id="GO:0019843">
    <property type="term" value="F:rRNA binding"/>
    <property type="evidence" value="ECO:0007669"/>
    <property type="project" value="UniProtKB-UniRule"/>
</dbReference>
<dbReference type="GO" id="GO:0003735">
    <property type="term" value="F:structural constituent of ribosome"/>
    <property type="evidence" value="ECO:0007669"/>
    <property type="project" value="InterPro"/>
</dbReference>
<dbReference type="GO" id="GO:0000049">
    <property type="term" value="F:tRNA binding"/>
    <property type="evidence" value="ECO:0007669"/>
    <property type="project" value="UniProtKB-UniRule"/>
</dbReference>
<dbReference type="GO" id="GO:0006412">
    <property type="term" value="P:translation"/>
    <property type="evidence" value="ECO:0007669"/>
    <property type="project" value="UniProtKB-UniRule"/>
</dbReference>
<dbReference type="FunFam" id="3.30.1440.10:FF:000001">
    <property type="entry name" value="50S ribosomal protein L5"/>
    <property type="match status" value="1"/>
</dbReference>
<dbReference type="Gene3D" id="3.30.1440.10">
    <property type="match status" value="1"/>
</dbReference>
<dbReference type="HAMAP" id="MF_01333_B">
    <property type="entry name" value="Ribosomal_uL5_B"/>
    <property type="match status" value="1"/>
</dbReference>
<dbReference type="InterPro" id="IPR002132">
    <property type="entry name" value="Ribosomal_uL5"/>
</dbReference>
<dbReference type="InterPro" id="IPR020930">
    <property type="entry name" value="Ribosomal_uL5_bac-type"/>
</dbReference>
<dbReference type="InterPro" id="IPR031309">
    <property type="entry name" value="Ribosomal_uL5_C"/>
</dbReference>
<dbReference type="InterPro" id="IPR020929">
    <property type="entry name" value="Ribosomal_uL5_CS"/>
</dbReference>
<dbReference type="InterPro" id="IPR022803">
    <property type="entry name" value="Ribosomal_uL5_dom_sf"/>
</dbReference>
<dbReference type="InterPro" id="IPR031310">
    <property type="entry name" value="Ribosomal_uL5_N"/>
</dbReference>
<dbReference type="NCBIfam" id="NF000585">
    <property type="entry name" value="PRK00010.1"/>
    <property type="match status" value="1"/>
</dbReference>
<dbReference type="PANTHER" id="PTHR11994">
    <property type="entry name" value="60S RIBOSOMAL PROTEIN L11-RELATED"/>
    <property type="match status" value="1"/>
</dbReference>
<dbReference type="Pfam" id="PF00281">
    <property type="entry name" value="Ribosomal_L5"/>
    <property type="match status" value="1"/>
</dbReference>
<dbReference type="Pfam" id="PF00673">
    <property type="entry name" value="Ribosomal_L5_C"/>
    <property type="match status" value="1"/>
</dbReference>
<dbReference type="PIRSF" id="PIRSF002161">
    <property type="entry name" value="Ribosomal_L5"/>
    <property type="match status" value="1"/>
</dbReference>
<dbReference type="SUPFAM" id="SSF55282">
    <property type="entry name" value="RL5-like"/>
    <property type="match status" value="1"/>
</dbReference>
<dbReference type="PROSITE" id="PS00358">
    <property type="entry name" value="RIBOSOMAL_L5"/>
    <property type="match status" value="1"/>
</dbReference>
<proteinExistence type="inferred from homology"/>
<comment type="function">
    <text evidence="1">This is one of the proteins that bind and probably mediate the attachment of the 5S RNA into the large ribosomal subunit, where it forms part of the central protuberance. In the 70S ribosome it contacts protein S13 of the 30S subunit (bridge B1b), connecting the 2 subunits; this bridge is implicated in subunit movement. Contacts the P site tRNA; the 5S rRNA and some of its associated proteins might help stabilize positioning of ribosome-bound tRNAs.</text>
</comment>
<comment type="subunit">
    <text evidence="1">Part of the 50S ribosomal subunit; part of the 5S rRNA/L5/L18/L25 subcomplex. Contacts the 5S rRNA and the P site tRNA. Forms a bridge to the 30S subunit in the 70S ribosome.</text>
</comment>
<comment type="similarity">
    <text evidence="1">Belongs to the universal ribosomal protein uL5 family.</text>
</comment>
<protein>
    <recommendedName>
        <fullName evidence="1">Large ribosomal subunit protein uL5</fullName>
    </recommendedName>
    <alternativeName>
        <fullName evidence="2">50S ribosomal protein L5</fullName>
    </alternativeName>
</protein>
<accession>Q02T68</accession>
<organism>
    <name type="scientific">Pseudomonas aeruginosa (strain UCBPP-PA14)</name>
    <dbReference type="NCBI Taxonomy" id="208963"/>
    <lineage>
        <taxon>Bacteria</taxon>
        <taxon>Pseudomonadati</taxon>
        <taxon>Pseudomonadota</taxon>
        <taxon>Gammaproteobacteria</taxon>
        <taxon>Pseudomonadales</taxon>
        <taxon>Pseudomonadaceae</taxon>
        <taxon>Pseudomonas</taxon>
    </lineage>
</organism>
<sequence length="179" mass="20392">MARLKEIYRKEIAPKLKEELQLANVMEVPRVTKITLNMGLGEAVGDKKIIENAVADLEKITGQKPVVTYARKSIAGFKIREGWPIGVKVTLRSDRMYEFLDRLLSISLPRVRDFRGLNAKSFDGRGNYSMGVKEQIIFPEIDYDKIDALRGLDITLTTTARTDDEGRALLRAFKFPFRN</sequence>
<reference key="1">
    <citation type="journal article" date="2006" name="Genome Biol.">
        <title>Genomic analysis reveals that Pseudomonas aeruginosa virulence is combinatorial.</title>
        <authorList>
            <person name="Lee D.G."/>
            <person name="Urbach J.M."/>
            <person name="Wu G."/>
            <person name="Liberati N.T."/>
            <person name="Feinbaum R.L."/>
            <person name="Miyata S."/>
            <person name="Diggins L.T."/>
            <person name="He J."/>
            <person name="Saucier M."/>
            <person name="Deziel E."/>
            <person name="Friedman L."/>
            <person name="Li L."/>
            <person name="Grills G."/>
            <person name="Montgomery K."/>
            <person name="Kucherlapati R."/>
            <person name="Rahme L.G."/>
            <person name="Ausubel F.M."/>
        </authorList>
    </citation>
    <scope>NUCLEOTIDE SEQUENCE [LARGE SCALE GENOMIC DNA]</scope>
    <source>
        <strain>UCBPP-PA14</strain>
    </source>
</reference>
<keyword id="KW-0687">Ribonucleoprotein</keyword>
<keyword id="KW-0689">Ribosomal protein</keyword>
<keyword id="KW-0694">RNA-binding</keyword>
<keyword id="KW-0699">rRNA-binding</keyword>
<keyword id="KW-0820">tRNA-binding</keyword>
<feature type="chain" id="PRO_1000052799" description="Large ribosomal subunit protein uL5">
    <location>
        <begin position="1"/>
        <end position="179"/>
    </location>
</feature>
<name>RL5_PSEAB</name>
<evidence type="ECO:0000255" key="1">
    <source>
        <dbReference type="HAMAP-Rule" id="MF_01333"/>
    </source>
</evidence>
<evidence type="ECO:0000305" key="2"/>
<gene>
    <name evidence="1" type="primary">rplE</name>
    <name type="ordered locus">PA14_08970</name>
</gene>